<feature type="chain" id="PRO_0000161944" description="Uncharacterized RNA methyltransferase alr3654">
    <location>
        <begin position="1"/>
        <end position="460"/>
    </location>
</feature>
<feature type="domain" description="TRAM" evidence="2">
    <location>
        <begin position="5"/>
        <end position="63"/>
    </location>
</feature>
<feature type="active site" description="Nucleophile" evidence="3">
    <location>
        <position position="410"/>
    </location>
</feature>
<feature type="binding site" evidence="1">
    <location>
        <position position="76"/>
    </location>
    <ligand>
        <name>[4Fe-4S] cluster</name>
        <dbReference type="ChEBI" id="CHEBI:49883"/>
    </ligand>
</feature>
<feature type="binding site" evidence="1">
    <location>
        <position position="82"/>
    </location>
    <ligand>
        <name>[4Fe-4S] cluster</name>
        <dbReference type="ChEBI" id="CHEBI:49883"/>
    </ligand>
</feature>
<feature type="binding site" evidence="1">
    <location>
        <position position="85"/>
    </location>
    <ligand>
        <name>[4Fe-4S] cluster</name>
        <dbReference type="ChEBI" id="CHEBI:49883"/>
    </ligand>
</feature>
<feature type="binding site" evidence="1">
    <location>
        <position position="164"/>
    </location>
    <ligand>
        <name>[4Fe-4S] cluster</name>
        <dbReference type="ChEBI" id="CHEBI:49883"/>
    </ligand>
</feature>
<feature type="binding site" evidence="3">
    <location>
        <position position="288"/>
    </location>
    <ligand>
        <name>S-adenosyl-L-methionine</name>
        <dbReference type="ChEBI" id="CHEBI:59789"/>
    </ligand>
</feature>
<feature type="binding site" evidence="3">
    <location>
        <position position="317"/>
    </location>
    <ligand>
        <name>S-adenosyl-L-methionine</name>
        <dbReference type="ChEBI" id="CHEBI:59789"/>
    </ligand>
</feature>
<feature type="binding site" evidence="3">
    <location>
        <position position="338"/>
    </location>
    <ligand>
        <name>S-adenosyl-L-methionine</name>
        <dbReference type="ChEBI" id="CHEBI:59789"/>
    </ligand>
</feature>
<feature type="binding site" evidence="3">
    <location>
        <position position="383"/>
    </location>
    <ligand>
        <name>S-adenosyl-L-methionine</name>
        <dbReference type="ChEBI" id="CHEBI:59789"/>
    </ligand>
</feature>
<dbReference type="EC" id="2.1.1.-"/>
<dbReference type="EMBL" id="BA000019">
    <property type="protein sequence ID" value="BAB75353.1"/>
    <property type="molecule type" value="Genomic_DNA"/>
</dbReference>
<dbReference type="PIR" id="AG2262">
    <property type="entry name" value="AG2262"/>
</dbReference>
<dbReference type="SMR" id="Q8YR05"/>
<dbReference type="STRING" id="103690.gene:10495696"/>
<dbReference type="KEGG" id="ana:alr3654"/>
<dbReference type="eggNOG" id="COG2265">
    <property type="taxonomic scope" value="Bacteria"/>
</dbReference>
<dbReference type="OrthoDB" id="9804590at2"/>
<dbReference type="Proteomes" id="UP000002483">
    <property type="component" value="Chromosome"/>
</dbReference>
<dbReference type="GO" id="GO:0051539">
    <property type="term" value="F:4 iron, 4 sulfur cluster binding"/>
    <property type="evidence" value="ECO:0007669"/>
    <property type="project" value="UniProtKB-KW"/>
</dbReference>
<dbReference type="GO" id="GO:0046872">
    <property type="term" value="F:metal ion binding"/>
    <property type="evidence" value="ECO:0007669"/>
    <property type="project" value="UniProtKB-KW"/>
</dbReference>
<dbReference type="GO" id="GO:0070041">
    <property type="term" value="F:rRNA (uridine-C5-)-methyltransferase activity"/>
    <property type="evidence" value="ECO:0007669"/>
    <property type="project" value="TreeGrafter"/>
</dbReference>
<dbReference type="GO" id="GO:0070475">
    <property type="term" value="P:rRNA base methylation"/>
    <property type="evidence" value="ECO:0007669"/>
    <property type="project" value="TreeGrafter"/>
</dbReference>
<dbReference type="CDD" id="cd02440">
    <property type="entry name" value="AdoMet_MTases"/>
    <property type="match status" value="1"/>
</dbReference>
<dbReference type="FunFam" id="3.40.50.150:FF:000009">
    <property type="entry name" value="23S rRNA (Uracil(1939)-C(5))-methyltransferase RlmD"/>
    <property type="match status" value="1"/>
</dbReference>
<dbReference type="FunFam" id="2.40.50.140:FF:000097">
    <property type="entry name" value="23S rRNA (uracil(1939)-C(5))-methyltransferase RlmD"/>
    <property type="match status" value="1"/>
</dbReference>
<dbReference type="FunFam" id="2.40.50.1070:FF:000003">
    <property type="entry name" value="23S rRNA (Uracil-5-)-methyltransferase RumA"/>
    <property type="match status" value="1"/>
</dbReference>
<dbReference type="Gene3D" id="2.40.50.1070">
    <property type="match status" value="1"/>
</dbReference>
<dbReference type="Gene3D" id="2.40.50.140">
    <property type="entry name" value="Nucleic acid-binding proteins"/>
    <property type="match status" value="1"/>
</dbReference>
<dbReference type="Gene3D" id="3.40.50.150">
    <property type="entry name" value="Vaccinia Virus protein VP39"/>
    <property type="match status" value="1"/>
</dbReference>
<dbReference type="InterPro" id="IPR025714">
    <property type="entry name" value="Methyltranfer_dom"/>
</dbReference>
<dbReference type="InterPro" id="IPR030390">
    <property type="entry name" value="MeTrfase_TrmA_AS"/>
</dbReference>
<dbReference type="InterPro" id="IPR012340">
    <property type="entry name" value="NA-bd_OB-fold"/>
</dbReference>
<dbReference type="InterPro" id="IPR029063">
    <property type="entry name" value="SAM-dependent_MTases_sf"/>
</dbReference>
<dbReference type="InterPro" id="IPR002792">
    <property type="entry name" value="TRAM_dom"/>
</dbReference>
<dbReference type="InterPro" id="IPR010280">
    <property type="entry name" value="U5_MeTrfase_fam"/>
</dbReference>
<dbReference type="NCBIfam" id="TIGR00479">
    <property type="entry name" value="rumA"/>
    <property type="match status" value="1"/>
</dbReference>
<dbReference type="PANTHER" id="PTHR11061">
    <property type="entry name" value="RNA M5U METHYLTRANSFERASE"/>
    <property type="match status" value="1"/>
</dbReference>
<dbReference type="PANTHER" id="PTHR11061:SF30">
    <property type="entry name" value="TRNA (URACIL(54)-C(5))-METHYLTRANSFERASE"/>
    <property type="match status" value="1"/>
</dbReference>
<dbReference type="Pfam" id="PF13847">
    <property type="entry name" value="Methyltransf_31"/>
    <property type="match status" value="1"/>
</dbReference>
<dbReference type="Pfam" id="PF01938">
    <property type="entry name" value="TRAM"/>
    <property type="match status" value="1"/>
</dbReference>
<dbReference type="SUPFAM" id="SSF50249">
    <property type="entry name" value="Nucleic acid-binding proteins"/>
    <property type="match status" value="1"/>
</dbReference>
<dbReference type="SUPFAM" id="SSF53335">
    <property type="entry name" value="S-adenosyl-L-methionine-dependent methyltransferases"/>
    <property type="match status" value="1"/>
</dbReference>
<dbReference type="PROSITE" id="PS51687">
    <property type="entry name" value="SAM_MT_RNA_M5U"/>
    <property type="match status" value="1"/>
</dbReference>
<dbReference type="PROSITE" id="PS50926">
    <property type="entry name" value="TRAM"/>
    <property type="match status" value="1"/>
</dbReference>
<dbReference type="PROSITE" id="PS01230">
    <property type="entry name" value="TRMA_1"/>
    <property type="match status" value="1"/>
</dbReference>
<reference key="1">
    <citation type="journal article" date="2001" name="DNA Res.">
        <title>Complete genomic sequence of the filamentous nitrogen-fixing cyanobacterium Anabaena sp. strain PCC 7120.</title>
        <authorList>
            <person name="Kaneko T."/>
            <person name="Nakamura Y."/>
            <person name="Wolk C.P."/>
            <person name="Kuritz T."/>
            <person name="Sasamoto S."/>
            <person name="Watanabe A."/>
            <person name="Iriguchi M."/>
            <person name="Ishikawa A."/>
            <person name="Kawashima K."/>
            <person name="Kimura T."/>
            <person name="Kishida Y."/>
            <person name="Kohara M."/>
            <person name="Matsumoto M."/>
            <person name="Matsuno A."/>
            <person name="Muraki A."/>
            <person name="Nakazaki N."/>
            <person name="Shimpo S."/>
            <person name="Sugimoto M."/>
            <person name="Takazawa M."/>
            <person name="Yamada M."/>
            <person name="Yasuda M."/>
            <person name="Tabata S."/>
        </authorList>
    </citation>
    <scope>NUCLEOTIDE SEQUENCE [LARGE SCALE GENOMIC DNA]</scope>
    <source>
        <strain>PCC 7120 / SAG 25.82 / UTEX 2576</strain>
    </source>
</reference>
<protein>
    <recommendedName>
        <fullName>Uncharacterized RNA methyltransferase alr3654</fullName>
        <ecNumber>2.1.1.-</ecNumber>
    </recommendedName>
</protein>
<accession>Q8YR05</accession>
<proteinExistence type="inferred from homology"/>
<keyword id="KW-0004">4Fe-4S</keyword>
<keyword id="KW-0408">Iron</keyword>
<keyword id="KW-0411">Iron-sulfur</keyword>
<keyword id="KW-0479">Metal-binding</keyword>
<keyword id="KW-0489">Methyltransferase</keyword>
<keyword id="KW-1185">Reference proteome</keyword>
<keyword id="KW-0949">S-adenosyl-L-methionine</keyword>
<keyword id="KW-0808">Transferase</keyword>
<organism>
    <name type="scientific">Nostoc sp. (strain PCC 7120 / SAG 25.82 / UTEX 2576)</name>
    <dbReference type="NCBI Taxonomy" id="103690"/>
    <lineage>
        <taxon>Bacteria</taxon>
        <taxon>Bacillati</taxon>
        <taxon>Cyanobacteriota</taxon>
        <taxon>Cyanophyceae</taxon>
        <taxon>Nostocales</taxon>
        <taxon>Nostocaceae</taxon>
        <taxon>Nostoc</taxon>
    </lineage>
</organism>
<sequence length="460" mass="51240">MTKSTWHQGELIEVAIADLSDTGDGVGRFAERVVFVPDTVPGDRVLVRLLHVKPNYAHGKLHQLLEPSPHRIRPGCIVADKCGGCQWQHIDYEYQLIAKRHQVIQALQRIGGFAQPPVDPVLVTASSLGYRNKATYPLDVSATGQVQAGYYQKGSHHVVNLNQCPVQDPRLNPLLAQVKQDIQQRDWPIYDEKRHQGQIRHLGLRIGRRTGEILLTLVVKDGNLPGIEQQAQEWLQRYPQLVGVSLNRNPERTNAIFGRETRCIAGVPYLREIFAGLEFQVRPDTFFQVFTETAEALLQVIESQLNLQGHETLIDAYCGIGTLTLPLSKQVRQAIGLELQPEAVQQAIVNAQHNGINNVEFQVGAVEKLLPKMGIIPDVVLLDPPRKGCDRIVIESLLASKPARIVYVSCKVATLARDLKLLCTDGTYTIQRIQSADFFPQTSHVEVAAFLVLSQSGKDN</sequence>
<name>Y3654_NOSS1</name>
<evidence type="ECO:0000250" key="1"/>
<evidence type="ECO:0000255" key="2">
    <source>
        <dbReference type="PROSITE-ProRule" id="PRU00208"/>
    </source>
</evidence>
<evidence type="ECO:0000255" key="3">
    <source>
        <dbReference type="PROSITE-ProRule" id="PRU01024"/>
    </source>
</evidence>
<comment type="similarity">
    <text evidence="3">Belongs to the class I-like SAM-binding methyltransferase superfamily. RNA M5U methyltransferase family.</text>
</comment>
<gene>
    <name type="ordered locus">alr3654</name>
</gene>